<accession>Q3SYS9</accession>
<sequence length="621" mass="72040">MADSPWDEIREKFQTALALSRVELHKNPEKEPYKSKYSARALLEEVKALLGPAPEDEDERPQADDSLGAGEHALGLPAELVEAEGPVAQGAVRRAVIEFHLGVNHIDTEELSAGEEHLVKCLRLLRKYRLSHDCVSLYIQAQNNLGILWSEREEIETAQAYLESSEALYNQYMKEIGSPPLDPTEHFLPEEEKLPEQERSKRFEKVYTHNLYYLAQVYQHMEMFEKAAHYCHSTLKRQLEHNAYHPMEWAINAATLSQFYINKQCFMEARHCLSAANVIFGQIGKIRTTEDTTEAEGDVPELYHQRKGEIARCWIKYCLTLMQNAQLSMQDNIGELDLDKQSELRALRKKELDEEESVRKKAVQFGTGELCDAISAVEEKVSYLRPLDFEEARELFLTGQHYVFEAKEFFQIDGYVTDHIEVVQDHSALFKVLAFFETDMERRCKMHKRRIAMLEPLIVDLNPQYYLLVNRQIQFEIAHAYYDMMDLKVAIADKLRDPDSHIVKKINNLNKSALKYYQLFLDSLRDPNKVFPEHIGEDVLRPAMLAKFRVARLYGKIITADPKKELENLATSLEHYKFIVDYCEKHPEAAQEIEVELELSKEMVSLLPTKMERFRTKMALT</sequence>
<comment type="function">
    <text evidence="1">Activator of KIF1B plus-end-directed microtubule motor activity. Required for organization of axonal microtubules, and axonal outgrowth and maintenance during peripheral and central nervous system development.</text>
</comment>
<comment type="subunit">
    <text evidence="1">Interacts with KIF1B; positively regulates KIF1B microtubule motor activity. Interacts with STMN2.</text>
</comment>
<comment type="subcellular location">
    <subcellularLocation>
        <location evidence="1">Cytoplasm</location>
        <location evidence="1">Cytoskeleton</location>
    </subcellularLocation>
</comment>
<comment type="similarity">
    <text evidence="2">Belongs to the KIF-binding protein family.</text>
</comment>
<protein>
    <recommendedName>
        <fullName>KIF-binding protein</fullName>
    </recommendedName>
    <alternativeName>
        <fullName>KIF1-binding protein</fullName>
    </alternativeName>
</protein>
<dbReference type="EMBL" id="BC103410">
    <property type="protein sequence ID" value="AAI03411.1"/>
    <property type="molecule type" value="mRNA"/>
</dbReference>
<dbReference type="RefSeq" id="NP_001029731.1">
    <property type="nucleotide sequence ID" value="NM_001034559.2"/>
</dbReference>
<dbReference type="SMR" id="Q3SYS9"/>
<dbReference type="FunCoup" id="Q3SYS9">
    <property type="interactions" value="2674"/>
</dbReference>
<dbReference type="STRING" id="9913.ENSBTAP00000019353"/>
<dbReference type="PaxDb" id="9913-ENSBTAP00000019353"/>
<dbReference type="Ensembl" id="ENSBTAT00000019353.4">
    <property type="protein sequence ID" value="ENSBTAP00000019353.2"/>
    <property type="gene ID" value="ENSBTAG00000014561.4"/>
</dbReference>
<dbReference type="GeneID" id="527433"/>
<dbReference type="KEGG" id="bta:527433"/>
<dbReference type="CTD" id="26128"/>
<dbReference type="VEuPathDB" id="HostDB:ENSBTAG00000014561"/>
<dbReference type="VGNC" id="VGNC:30592">
    <property type="gene designation" value="KIFBP"/>
</dbReference>
<dbReference type="eggNOG" id="ENOG502QPZT">
    <property type="taxonomic scope" value="Eukaryota"/>
</dbReference>
<dbReference type="GeneTree" id="ENSGT00390000013819"/>
<dbReference type="HOGENOM" id="CLU_019859_1_0_1"/>
<dbReference type="InParanoid" id="Q3SYS9"/>
<dbReference type="OMA" id="ICRECWY"/>
<dbReference type="OrthoDB" id="409897at2759"/>
<dbReference type="TreeFam" id="TF324211"/>
<dbReference type="Proteomes" id="UP000009136">
    <property type="component" value="Chromosome 28"/>
</dbReference>
<dbReference type="Bgee" id="ENSBTAG00000014561">
    <property type="expression patterns" value="Expressed in occipital lobe and 103 other cell types or tissues"/>
</dbReference>
<dbReference type="GO" id="GO:0005856">
    <property type="term" value="C:cytoskeleton"/>
    <property type="evidence" value="ECO:0007669"/>
    <property type="project" value="UniProtKB-SubCell"/>
</dbReference>
<dbReference type="GO" id="GO:0005739">
    <property type="term" value="C:mitochondrion"/>
    <property type="evidence" value="ECO:0000250"/>
    <property type="project" value="UniProtKB"/>
</dbReference>
<dbReference type="GO" id="GO:0019894">
    <property type="term" value="F:kinesin binding"/>
    <property type="evidence" value="ECO:0007669"/>
    <property type="project" value="Ensembl"/>
</dbReference>
<dbReference type="GO" id="GO:0140311">
    <property type="term" value="F:protein sequestering activity"/>
    <property type="evidence" value="ECO:0007669"/>
    <property type="project" value="Ensembl"/>
</dbReference>
<dbReference type="GO" id="GO:0021952">
    <property type="term" value="P:central nervous system projection neuron axonogenesis"/>
    <property type="evidence" value="ECO:0000318"/>
    <property type="project" value="GO_Central"/>
</dbReference>
<dbReference type="GO" id="GO:0001701">
    <property type="term" value="P:in utero embryonic development"/>
    <property type="evidence" value="ECO:0007669"/>
    <property type="project" value="Ensembl"/>
</dbReference>
<dbReference type="GO" id="GO:0000226">
    <property type="term" value="P:microtubule cytoskeleton organization"/>
    <property type="evidence" value="ECO:0000318"/>
    <property type="project" value="GO_Central"/>
</dbReference>
<dbReference type="GO" id="GO:0047497">
    <property type="term" value="P:mitochondrion transport along microtubule"/>
    <property type="evidence" value="ECO:0000250"/>
    <property type="project" value="UniProtKB"/>
</dbReference>
<dbReference type="GO" id="GO:1990535">
    <property type="term" value="P:neuron projection maintenance"/>
    <property type="evidence" value="ECO:0000318"/>
    <property type="project" value="GO_Central"/>
</dbReference>
<dbReference type="FunFam" id="1.25.40.10:FF:000753">
    <property type="entry name" value="KIF1-binding protein"/>
    <property type="match status" value="1"/>
</dbReference>
<dbReference type="Gene3D" id="1.25.40.10">
    <property type="entry name" value="Tetratricopeptide repeat domain"/>
    <property type="match status" value="1"/>
</dbReference>
<dbReference type="InterPro" id="IPR022083">
    <property type="entry name" value="KBP"/>
</dbReference>
<dbReference type="InterPro" id="IPR011990">
    <property type="entry name" value="TPR-like_helical_dom_sf"/>
</dbReference>
<dbReference type="PANTHER" id="PTHR46321:SF1">
    <property type="entry name" value="KIF-BINDING PROTEIN"/>
    <property type="match status" value="1"/>
</dbReference>
<dbReference type="PANTHER" id="PTHR46321">
    <property type="entry name" value="KIF1-BINDING PROTEIN"/>
    <property type="match status" value="1"/>
</dbReference>
<dbReference type="Pfam" id="PF12309">
    <property type="entry name" value="KBP_C"/>
    <property type="match status" value="1"/>
</dbReference>
<dbReference type="SUPFAM" id="SSF48452">
    <property type="entry name" value="TPR-like"/>
    <property type="match status" value="1"/>
</dbReference>
<feature type="chain" id="PRO_0000334516" description="KIF-binding protein">
    <location>
        <begin position="1"/>
        <end position="621"/>
    </location>
</feature>
<feature type="modified residue" description="Phosphoserine" evidence="1">
    <location>
        <position position="178"/>
    </location>
</feature>
<keyword id="KW-0963">Cytoplasm</keyword>
<keyword id="KW-0206">Cytoskeleton</keyword>
<keyword id="KW-0217">Developmental protein</keyword>
<keyword id="KW-0221">Differentiation</keyword>
<keyword id="KW-0524">Neurogenesis</keyword>
<keyword id="KW-0597">Phosphoprotein</keyword>
<keyword id="KW-1185">Reference proteome</keyword>
<evidence type="ECO:0000250" key="1">
    <source>
        <dbReference type="UniProtKB" id="Q96EK5"/>
    </source>
</evidence>
<evidence type="ECO:0000305" key="2"/>
<reference key="1">
    <citation type="submission" date="2005-08" db="EMBL/GenBank/DDBJ databases">
        <authorList>
            <consortium name="NIH - Mammalian Gene Collection (MGC) project"/>
        </authorList>
    </citation>
    <scope>NUCLEOTIDE SEQUENCE [LARGE SCALE MRNA]</scope>
    <source>
        <strain>Crossbred X Angus</strain>
        <tissue>Ileum</tissue>
    </source>
</reference>
<gene>
    <name type="primary">KIFBP</name>
    <name type="synonym">KBP</name>
</gene>
<proteinExistence type="evidence at transcript level"/>
<name>KBP_BOVIN</name>
<organism>
    <name type="scientific">Bos taurus</name>
    <name type="common">Bovine</name>
    <dbReference type="NCBI Taxonomy" id="9913"/>
    <lineage>
        <taxon>Eukaryota</taxon>
        <taxon>Metazoa</taxon>
        <taxon>Chordata</taxon>
        <taxon>Craniata</taxon>
        <taxon>Vertebrata</taxon>
        <taxon>Euteleostomi</taxon>
        <taxon>Mammalia</taxon>
        <taxon>Eutheria</taxon>
        <taxon>Laurasiatheria</taxon>
        <taxon>Artiodactyla</taxon>
        <taxon>Ruminantia</taxon>
        <taxon>Pecora</taxon>
        <taxon>Bovidae</taxon>
        <taxon>Bovinae</taxon>
        <taxon>Bos</taxon>
    </lineage>
</organism>